<protein>
    <recommendedName>
        <fullName evidence="1">2-isopropylmalate synthase</fullName>
        <ecNumber evidence="1">2.3.3.13</ecNumber>
    </recommendedName>
    <alternativeName>
        <fullName evidence="1">Alpha-IPM synthase</fullName>
    </alternativeName>
    <alternativeName>
        <fullName evidence="1">Alpha-isopropylmalate synthase</fullName>
    </alternativeName>
</protein>
<accession>Q0HZT4</accession>
<keyword id="KW-0028">Amino-acid biosynthesis</keyword>
<keyword id="KW-0100">Branched-chain amino acid biosynthesis</keyword>
<keyword id="KW-0963">Cytoplasm</keyword>
<keyword id="KW-0432">Leucine biosynthesis</keyword>
<keyword id="KW-0464">Manganese</keyword>
<keyword id="KW-0479">Metal-binding</keyword>
<keyword id="KW-0808">Transferase</keyword>
<reference key="1">
    <citation type="submission" date="2006-08" db="EMBL/GenBank/DDBJ databases">
        <title>Complete sequence of chromosome 1 of Shewanella sp. MR-7.</title>
        <authorList>
            <person name="Copeland A."/>
            <person name="Lucas S."/>
            <person name="Lapidus A."/>
            <person name="Barry K."/>
            <person name="Detter J.C."/>
            <person name="Glavina del Rio T."/>
            <person name="Hammon N."/>
            <person name="Israni S."/>
            <person name="Dalin E."/>
            <person name="Tice H."/>
            <person name="Pitluck S."/>
            <person name="Kiss H."/>
            <person name="Brettin T."/>
            <person name="Bruce D."/>
            <person name="Han C."/>
            <person name="Tapia R."/>
            <person name="Gilna P."/>
            <person name="Schmutz J."/>
            <person name="Larimer F."/>
            <person name="Land M."/>
            <person name="Hauser L."/>
            <person name="Kyrpides N."/>
            <person name="Mikhailova N."/>
            <person name="Nealson K."/>
            <person name="Konstantinidis K."/>
            <person name="Klappenbach J."/>
            <person name="Tiedje J."/>
            <person name="Richardson P."/>
        </authorList>
    </citation>
    <scope>NUCLEOTIDE SEQUENCE [LARGE SCALE GENOMIC DNA]</scope>
    <source>
        <strain>MR-7</strain>
    </source>
</reference>
<feature type="chain" id="PRO_1000149292" description="2-isopropylmalate synthase">
    <location>
        <begin position="1"/>
        <end position="522"/>
    </location>
</feature>
<feature type="domain" description="Pyruvate carboxyltransferase" evidence="1">
    <location>
        <begin position="5"/>
        <end position="267"/>
    </location>
</feature>
<feature type="region of interest" description="Regulatory domain" evidence="1">
    <location>
        <begin position="392"/>
        <end position="522"/>
    </location>
</feature>
<feature type="binding site" evidence="1">
    <location>
        <position position="14"/>
    </location>
    <ligand>
        <name>Mn(2+)</name>
        <dbReference type="ChEBI" id="CHEBI:29035"/>
    </ligand>
</feature>
<feature type="binding site" evidence="1">
    <location>
        <position position="202"/>
    </location>
    <ligand>
        <name>Mn(2+)</name>
        <dbReference type="ChEBI" id="CHEBI:29035"/>
    </ligand>
</feature>
<feature type="binding site" evidence="1">
    <location>
        <position position="204"/>
    </location>
    <ligand>
        <name>Mn(2+)</name>
        <dbReference type="ChEBI" id="CHEBI:29035"/>
    </ligand>
</feature>
<feature type="binding site" evidence="1">
    <location>
        <position position="238"/>
    </location>
    <ligand>
        <name>Mn(2+)</name>
        <dbReference type="ChEBI" id="CHEBI:29035"/>
    </ligand>
</feature>
<sequence length="522" mass="57023">MSNRVIIFDTTLRDGEQALAASLSVKEKLQIAMALERLGVDVMEVGFPVSSPGDFESVQTIARTIKNSRVCALSRALEKDIDAAAQALSVAEQFRIHTFISTSTIHVESKLKRSFEQVLEMAVGAVKYARRFTDDVEFSCEDAGRTPIDNLCRMVEAAIHAGARTINIPDTVGYTVPSEFGGIIQTLFNRVPNIDQAIISVHCHDDLGMSVANSITAVQHGARQIECTMNGIGERAGNCSLEEIAMILATRKNLLGVETGINAKEIHRTSNLVSQLCNMPIQSNKAIVGANAFTHSSGIHQDGMLKAQNTYEIMTPESIGLNRNNLNMTSRSGRHVIKHRMEEMGYSEQNYNLDALYEQFLHLADKKGQVFDYDLEALAFMEAQAAEDNFYQLQQLVVQSDSTEGVATATVRIDVGGEIKTEAATGNGPVDAAYNAIARATDRRIDIISYKLSAKGEGQNALGQVDITAVYHEQNFHGVGLATDVVEASARALVHVMNLTCRADKVADYKQNMHKNRELGGV</sequence>
<proteinExistence type="inferred from homology"/>
<organism>
    <name type="scientific">Shewanella sp. (strain MR-7)</name>
    <dbReference type="NCBI Taxonomy" id="60481"/>
    <lineage>
        <taxon>Bacteria</taxon>
        <taxon>Pseudomonadati</taxon>
        <taxon>Pseudomonadota</taxon>
        <taxon>Gammaproteobacteria</taxon>
        <taxon>Alteromonadales</taxon>
        <taxon>Shewanellaceae</taxon>
        <taxon>Shewanella</taxon>
    </lineage>
</organism>
<gene>
    <name evidence="1" type="primary">leuA</name>
    <name type="ordered locus">Shewmr7_0368</name>
</gene>
<name>LEU1_SHESR</name>
<dbReference type="EC" id="2.3.3.13" evidence="1"/>
<dbReference type="EMBL" id="CP000444">
    <property type="protein sequence ID" value="ABI41371.1"/>
    <property type="molecule type" value="Genomic_DNA"/>
</dbReference>
<dbReference type="SMR" id="Q0HZT4"/>
<dbReference type="KEGG" id="shm:Shewmr7_0368"/>
<dbReference type="HOGENOM" id="CLU_022158_0_1_6"/>
<dbReference type="UniPathway" id="UPA00048">
    <property type="reaction ID" value="UER00070"/>
</dbReference>
<dbReference type="GO" id="GO:0005829">
    <property type="term" value="C:cytosol"/>
    <property type="evidence" value="ECO:0007669"/>
    <property type="project" value="TreeGrafter"/>
</dbReference>
<dbReference type="GO" id="GO:0003852">
    <property type="term" value="F:2-isopropylmalate synthase activity"/>
    <property type="evidence" value="ECO:0007669"/>
    <property type="project" value="UniProtKB-UniRule"/>
</dbReference>
<dbReference type="GO" id="GO:0003985">
    <property type="term" value="F:acetyl-CoA C-acetyltransferase activity"/>
    <property type="evidence" value="ECO:0007669"/>
    <property type="project" value="UniProtKB-UniRule"/>
</dbReference>
<dbReference type="GO" id="GO:0030145">
    <property type="term" value="F:manganese ion binding"/>
    <property type="evidence" value="ECO:0007669"/>
    <property type="project" value="UniProtKB-UniRule"/>
</dbReference>
<dbReference type="GO" id="GO:0009098">
    <property type="term" value="P:L-leucine biosynthetic process"/>
    <property type="evidence" value="ECO:0007669"/>
    <property type="project" value="UniProtKB-UniRule"/>
</dbReference>
<dbReference type="CDD" id="cd07940">
    <property type="entry name" value="DRE_TIM_IPMS"/>
    <property type="match status" value="1"/>
</dbReference>
<dbReference type="FunFam" id="1.10.238.260:FF:000001">
    <property type="entry name" value="2-isopropylmalate synthase"/>
    <property type="match status" value="1"/>
</dbReference>
<dbReference type="FunFam" id="3.20.20.70:FF:000010">
    <property type="entry name" value="2-isopropylmalate synthase"/>
    <property type="match status" value="1"/>
</dbReference>
<dbReference type="FunFam" id="3.30.160.270:FF:000001">
    <property type="entry name" value="2-isopropylmalate synthase"/>
    <property type="match status" value="1"/>
</dbReference>
<dbReference type="Gene3D" id="1.10.238.260">
    <property type="match status" value="1"/>
</dbReference>
<dbReference type="Gene3D" id="3.30.160.270">
    <property type="match status" value="1"/>
</dbReference>
<dbReference type="Gene3D" id="3.20.20.70">
    <property type="entry name" value="Aldolase class I"/>
    <property type="match status" value="1"/>
</dbReference>
<dbReference type="HAMAP" id="MF_01025">
    <property type="entry name" value="LeuA_type1"/>
    <property type="match status" value="1"/>
</dbReference>
<dbReference type="InterPro" id="IPR050073">
    <property type="entry name" value="2-IPM_HCS-like"/>
</dbReference>
<dbReference type="InterPro" id="IPR013709">
    <property type="entry name" value="2-isopropylmalate_synth_dimer"/>
</dbReference>
<dbReference type="InterPro" id="IPR002034">
    <property type="entry name" value="AIPM/Hcit_synth_CS"/>
</dbReference>
<dbReference type="InterPro" id="IPR013785">
    <property type="entry name" value="Aldolase_TIM"/>
</dbReference>
<dbReference type="InterPro" id="IPR054691">
    <property type="entry name" value="LeuA/HCS_post-cat"/>
</dbReference>
<dbReference type="InterPro" id="IPR036230">
    <property type="entry name" value="LeuA_allosteric_dom_sf"/>
</dbReference>
<dbReference type="InterPro" id="IPR005671">
    <property type="entry name" value="LeuA_bact_synth"/>
</dbReference>
<dbReference type="InterPro" id="IPR000891">
    <property type="entry name" value="PYR_CT"/>
</dbReference>
<dbReference type="NCBIfam" id="TIGR00973">
    <property type="entry name" value="leuA_bact"/>
    <property type="match status" value="1"/>
</dbReference>
<dbReference type="NCBIfam" id="NF002084">
    <property type="entry name" value="PRK00915.1-1"/>
    <property type="match status" value="1"/>
</dbReference>
<dbReference type="NCBIfam" id="NF002086">
    <property type="entry name" value="PRK00915.1-3"/>
    <property type="match status" value="1"/>
</dbReference>
<dbReference type="PANTHER" id="PTHR10277:SF9">
    <property type="entry name" value="2-ISOPROPYLMALATE SYNTHASE 1, CHLOROPLASTIC-RELATED"/>
    <property type="match status" value="1"/>
</dbReference>
<dbReference type="PANTHER" id="PTHR10277">
    <property type="entry name" value="HOMOCITRATE SYNTHASE-RELATED"/>
    <property type="match status" value="1"/>
</dbReference>
<dbReference type="Pfam" id="PF22617">
    <property type="entry name" value="HCS_D2"/>
    <property type="match status" value="1"/>
</dbReference>
<dbReference type="Pfam" id="PF00682">
    <property type="entry name" value="HMGL-like"/>
    <property type="match status" value="1"/>
</dbReference>
<dbReference type="Pfam" id="PF08502">
    <property type="entry name" value="LeuA_dimer"/>
    <property type="match status" value="1"/>
</dbReference>
<dbReference type="SMART" id="SM00917">
    <property type="entry name" value="LeuA_dimer"/>
    <property type="match status" value="1"/>
</dbReference>
<dbReference type="SUPFAM" id="SSF110921">
    <property type="entry name" value="2-isopropylmalate synthase LeuA, allosteric (dimerisation) domain"/>
    <property type="match status" value="1"/>
</dbReference>
<dbReference type="SUPFAM" id="SSF51569">
    <property type="entry name" value="Aldolase"/>
    <property type="match status" value="1"/>
</dbReference>
<dbReference type="PROSITE" id="PS00815">
    <property type="entry name" value="AIPM_HOMOCIT_SYNTH_1"/>
    <property type="match status" value="1"/>
</dbReference>
<dbReference type="PROSITE" id="PS00816">
    <property type="entry name" value="AIPM_HOMOCIT_SYNTH_2"/>
    <property type="match status" value="1"/>
</dbReference>
<dbReference type="PROSITE" id="PS50991">
    <property type="entry name" value="PYR_CT"/>
    <property type="match status" value="1"/>
</dbReference>
<evidence type="ECO:0000255" key="1">
    <source>
        <dbReference type="HAMAP-Rule" id="MF_01025"/>
    </source>
</evidence>
<comment type="function">
    <text evidence="1">Catalyzes the condensation of the acetyl group of acetyl-CoA with 3-methyl-2-oxobutanoate (2-ketoisovalerate) to form 3-carboxy-3-hydroxy-4-methylpentanoate (2-isopropylmalate).</text>
</comment>
<comment type="catalytic activity">
    <reaction evidence="1">
        <text>3-methyl-2-oxobutanoate + acetyl-CoA + H2O = (2S)-2-isopropylmalate + CoA + H(+)</text>
        <dbReference type="Rhea" id="RHEA:21524"/>
        <dbReference type="ChEBI" id="CHEBI:1178"/>
        <dbReference type="ChEBI" id="CHEBI:11851"/>
        <dbReference type="ChEBI" id="CHEBI:15377"/>
        <dbReference type="ChEBI" id="CHEBI:15378"/>
        <dbReference type="ChEBI" id="CHEBI:57287"/>
        <dbReference type="ChEBI" id="CHEBI:57288"/>
        <dbReference type="EC" id="2.3.3.13"/>
    </reaction>
</comment>
<comment type="cofactor">
    <cofactor evidence="1">
        <name>Mn(2+)</name>
        <dbReference type="ChEBI" id="CHEBI:29035"/>
    </cofactor>
</comment>
<comment type="pathway">
    <text evidence="1">Amino-acid biosynthesis; L-leucine biosynthesis; L-leucine from 3-methyl-2-oxobutanoate: step 1/4.</text>
</comment>
<comment type="subunit">
    <text evidence="1">Homodimer.</text>
</comment>
<comment type="subcellular location">
    <subcellularLocation>
        <location evidence="1">Cytoplasm</location>
    </subcellularLocation>
</comment>
<comment type="similarity">
    <text evidence="1">Belongs to the alpha-IPM synthase/homocitrate synthase family. LeuA type 1 subfamily.</text>
</comment>